<accession>P0CAX3</accession>
<accession>Q59269</accession>
<reference key="1">
    <citation type="journal article" date="2001" name="Proc. Natl. Acad. Sci. U.S.A.">
        <title>Complete genome sequence of Caulobacter crescentus.</title>
        <authorList>
            <person name="Nierman W.C."/>
            <person name="Feldblyum T.V."/>
            <person name="Laub M.T."/>
            <person name="Paulsen I.T."/>
            <person name="Nelson K.E."/>
            <person name="Eisen J.A."/>
            <person name="Heidelberg J.F."/>
            <person name="Alley M.R.K."/>
            <person name="Ohta N."/>
            <person name="Maddock J.R."/>
            <person name="Potocka I."/>
            <person name="Nelson W.C."/>
            <person name="Newton A."/>
            <person name="Stephens C."/>
            <person name="Phadke N.D."/>
            <person name="Ely B."/>
            <person name="DeBoy R.T."/>
            <person name="Dodson R.J."/>
            <person name="Durkin A.S."/>
            <person name="Gwinn M.L."/>
            <person name="Haft D.H."/>
            <person name="Kolonay J.F."/>
            <person name="Smit J."/>
            <person name="Craven M.B."/>
            <person name="Khouri H.M."/>
            <person name="Shetty J."/>
            <person name="Berry K.J."/>
            <person name="Utterback T.R."/>
            <person name="Tran K."/>
            <person name="Wolf A.M."/>
            <person name="Vamathevan J.J."/>
            <person name="Ermolaeva M.D."/>
            <person name="White O."/>
            <person name="Salzberg S.L."/>
            <person name="Venter J.C."/>
            <person name="Shapiro L."/>
            <person name="Fraser C.M."/>
        </authorList>
    </citation>
    <scope>NUCLEOTIDE SEQUENCE [LARGE SCALE GENOMIC DNA]</scope>
    <source>
        <strain>ATCC 19089 / CIP 103742 / CB 15</strain>
    </source>
</reference>
<keyword id="KW-0963">Cytoplasm</keyword>
<keyword id="KW-0210">Decarboxylase</keyword>
<keyword id="KW-0456">Lyase</keyword>
<keyword id="KW-0627">Porphyrin biosynthesis</keyword>
<keyword id="KW-1185">Reference proteome</keyword>
<gene>
    <name evidence="2" type="primary">hemE</name>
    <name type="ordered locus">CC_3763</name>
</gene>
<proteinExistence type="inferred from homology"/>
<organism>
    <name type="scientific">Caulobacter vibrioides (strain ATCC 19089 / CIP 103742 / CB 15)</name>
    <name type="common">Caulobacter crescentus</name>
    <dbReference type="NCBI Taxonomy" id="190650"/>
    <lineage>
        <taxon>Bacteria</taxon>
        <taxon>Pseudomonadati</taxon>
        <taxon>Pseudomonadota</taxon>
        <taxon>Alphaproteobacteria</taxon>
        <taxon>Caulobacterales</taxon>
        <taxon>Caulobacteraceae</taxon>
        <taxon>Caulobacter</taxon>
    </lineage>
</organism>
<sequence>MTSSSPILKQTPKFLSALEGQSHANPPVWFMRQAGRYLPEYRAVRATAPDFISFCFDPEKAAEVTLQPMRRFPFDASIVFADILLIPGALGQKVWFEAGEGPKLGDMPSVESMAEKAGEAGKALSLVGETLTRVRSALDPDKALIGFAGAPWTVATYMIEKGSSDRSGARTFAYQNPETLDALIQVLVDATIDYLAMQVDAGAQALKLFESWAEGLSEPLFDRLVTQPHIRIIEGLRARGVTVPIIGFPRGAGTLVEDYAARTPVQGVALDTSASAKLGQTIQKTKTIQGALDPLLLRAGGDALLKRVDEMLEQWNQGPYIFNLGHGILPDTPIAHVEAVLERVTGQKVGQ</sequence>
<feature type="chain" id="PRO_0000187592" description="Uroporphyrinogen decarboxylase">
    <location>
        <begin position="1"/>
        <end position="351"/>
    </location>
</feature>
<feature type="binding site" evidence="2">
    <location>
        <begin position="32"/>
        <end position="36"/>
    </location>
    <ligand>
        <name>substrate</name>
    </ligand>
</feature>
<feature type="binding site" evidence="2">
    <location>
        <position position="51"/>
    </location>
    <ligand>
        <name>substrate</name>
    </ligand>
</feature>
<feature type="binding site" evidence="2">
    <location>
        <position position="82"/>
    </location>
    <ligand>
        <name>substrate</name>
    </ligand>
</feature>
<feature type="binding site" evidence="2">
    <location>
        <position position="157"/>
    </location>
    <ligand>
        <name>substrate</name>
    </ligand>
</feature>
<feature type="binding site" evidence="2">
    <location>
        <position position="211"/>
    </location>
    <ligand>
        <name>substrate</name>
    </ligand>
</feature>
<feature type="binding site" evidence="2">
    <location>
        <position position="326"/>
    </location>
    <ligand>
        <name>substrate</name>
    </ligand>
</feature>
<feature type="site" description="Transition state stabilizer" evidence="2">
    <location>
        <position position="82"/>
    </location>
</feature>
<dbReference type="EC" id="4.1.1.37" evidence="2"/>
<dbReference type="EMBL" id="AE005673">
    <property type="protein sequence ID" value="AAK25725.1"/>
    <property type="molecule type" value="Genomic_DNA"/>
</dbReference>
<dbReference type="PIR" id="A87716">
    <property type="entry name" value="A87716"/>
</dbReference>
<dbReference type="RefSeq" id="NP_422557.1">
    <property type="nucleotide sequence ID" value="NC_002696.2"/>
</dbReference>
<dbReference type="RefSeq" id="WP_010921590.1">
    <property type="nucleotide sequence ID" value="NC_002696.2"/>
</dbReference>
<dbReference type="SMR" id="P0CAX3"/>
<dbReference type="STRING" id="190650.CC_3763"/>
<dbReference type="EnsemblBacteria" id="AAK25725">
    <property type="protein sequence ID" value="AAK25725"/>
    <property type="gene ID" value="CC_3763"/>
</dbReference>
<dbReference type="KEGG" id="ccr:CC_3763"/>
<dbReference type="PATRIC" id="fig|190650.5.peg.3765"/>
<dbReference type="eggNOG" id="COG0407">
    <property type="taxonomic scope" value="Bacteria"/>
</dbReference>
<dbReference type="HOGENOM" id="CLU_040933_0_0_5"/>
<dbReference type="BioCyc" id="CAULO:CC3763-MONOMER"/>
<dbReference type="UniPathway" id="UPA00251">
    <property type="reaction ID" value="UER00321"/>
</dbReference>
<dbReference type="Proteomes" id="UP000001816">
    <property type="component" value="Chromosome"/>
</dbReference>
<dbReference type="GO" id="GO:0005829">
    <property type="term" value="C:cytosol"/>
    <property type="evidence" value="ECO:0007669"/>
    <property type="project" value="TreeGrafter"/>
</dbReference>
<dbReference type="GO" id="GO:0004853">
    <property type="term" value="F:uroporphyrinogen decarboxylase activity"/>
    <property type="evidence" value="ECO:0007669"/>
    <property type="project" value="UniProtKB-UniRule"/>
</dbReference>
<dbReference type="GO" id="GO:0019353">
    <property type="term" value="P:protoporphyrinogen IX biosynthetic process from glutamate"/>
    <property type="evidence" value="ECO:0007669"/>
    <property type="project" value="TreeGrafter"/>
</dbReference>
<dbReference type="CDD" id="cd00717">
    <property type="entry name" value="URO-D"/>
    <property type="match status" value="1"/>
</dbReference>
<dbReference type="Gene3D" id="3.20.20.210">
    <property type="match status" value="1"/>
</dbReference>
<dbReference type="HAMAP" id="MF_00218">
    <property type="entry name" value="URO_D"/>
    <property type="match status" value="1"/>
</dbReference>
<dbReference type="InterPro" id="IPR038071">
    <property type="entry name" value="UROD/MetE-like_sf"/>
</dbReference>
<dbReference type="InterPro" id="IPR006361">
    <property type="entry name" value="Uroporphyrinogen_deCO2ase_HemE"/>
</dbReference>
<dbReference type="InterPro" id="IPR000257">
    <property type="entry name" value="Uroporphyrinogen_deCOase"/>
</dbReference>
<dbReference type="NCBIfam" id="TIGR01464">
    <property type="entry name" value="hemE"/>
    <property type="match status" value="1"/>
</dbReference>
<dbReference type="PANTHER" id="PTHR21091">
    <property type="entry name" value="METHYLTETRAHYDROFOLATE:HOMOCYSTEINE METHYLTRANSFERASE RELATED"/>
    <property type="match status" value="1"/>
</dbReference>
<dbReference type="PANTHER" id="PTHR21091:SF169">
    <property type="entry name" value="UROPORPHYRINOGEN DECARBOXYLASE"/>
    <property type="match status" value="1"/>
</dbReference>
<dbReference type="Pfam" id="PF01208">
    <property type="entry name" value="URO-D"/>
    <property type="match status" value="1"/>
</dbReference>
<dbReference type="SUPFAM" id="SSF51726">
    <property type="entry name" value="UROD/MetE-like"/>
    <property type="match status" value="1"/>
</dbReference>
<dbReference type="PROSITE" id="PS00906">
    <property type="entry name" value="UROD_1"/>
    <property type="match status" value="1"/>
</dbReference>
<dbReference type="PROSITE" id="PS00907">
    <property type="entry name" value="UROD_2"/>
    <property type="match status" value="1"/>
</dbReference>
<name>DCUP_CAUVC</name>
<comment type="function">
    <text evidence="1">Catalyzes the decarboxylation of four acetate groups of uroporphyrinogen III to yield coproporphyrinogen III.</text>
</comment>
<comment type="catalytic activity">
    <reaction evidence="2">
        <text>uroporphyrinogen III + 4 H(+) = coproporphyrinogen III + 4 CO2</text>
        <dbReference type="Rhea" id="RHEA:19865"/>
        <dbReference type="ChEBI" id="CHEBI:15378"/>
        <dbReference type="ChEBI" id="CHEBI:16526"/>
        <dbReference type="ChEBI" id="CHEBI:57308"/>
        <dbReference type="ChEBI" id="CHEBI:57309"/>
        <dbReference type="EC" id="4.1.1.37"/>
    </reaction>
</comment>
<comment type="pathway">
    <text evidence="2">Porphyrin-containing compound metabolism; protoporphyrin-IX biosynthesis; coproporphyrinogen-III from 5-aminolevulinate: step 4/4.</text>
</comment>
<comment type="subunit">
    <text evidence="2">Homodimer.</text>
</comment>
<comment type="subcellular location">
    <subcellularLocation>
        <location evidence="2">Cytoplasm</location>
    </subcellularLocation>
</comment>
<comment type="similarity">
    <text evidence="2">Belongs to the uroporphyrinogen decarboxylase family.</text>
</comment>
<evidence type="ECO:0000250" key="1"/>
<evidence type="ECO:0000255" key="2">
    <source>
        <dbReference type="HAMAP-Rule" id="MF_00218"/>
    </source>
</evidence>
<protein>
    <recommendedName>
        <fullName evidence="2">Uroporphyrinogen decarboxylase</fullName>
        <shortName evidence="2">UPD</shortName>
        <shortName evidence="2">URO-D</shortName>
        <ecNumber evidence="2">4.1.1.37</ecNumber>
    </recommendedName>
</protein>